<accession>Q8FQR2</accession>
<dbReference type="EC" id="2.7.1.33" evidence="1"/>
<dbReference type="EMBL" id="BA000035">
    <property type="protein sequence ID" value="BAC17867.1"/>
    <property type="molecule type" value="Genomic_DNA"/>
</dbReference>
<dbReference type="RefSeq" id="WP_006769984.1">
    <property type="nucleotide sequence ID" value="NC_004369.1"/>
</dbReference>
<dbReference type="SMR" id="Q8FQR2"/>
<dbReference type="STRING" id="196164.gene:10741465"/>
<dbReference type="KEGG" id="cef:CE1057"/>
<dbReference type="eggNOG" id="COG1072">
    <property type="taxonomic scope" value="Bacteria"/>
</dbReference>
<dbReference type="HOGENOM" id="CLU_053818_1_1_11"/>
<dbReference type="OrthoDB" id="1550976at2"/>
<dbReference type="UniPathway" id="UPA00241">
    <property type="reaction ID" value="UER00352"/>
</dbReference>
<dbReference type="Proteomes" id="UP000001409">
    <property type="component" value="Chromosome"/>
</dbReference>
<dbReference type="GO" id="GO:0005737">
    <property type="term" value="C:cytoplasm"/>
    <property type="evidence" value="ECO:0007669"/>
    <property type="project" value="UniProtKB-SubCell"/>
</dbReference>
<dbReference type="GO" id="GO:0005524">
    <property type="term" value="F:ATP binding"/>
    <property type="evidence" value="ECO:0007669"/>
    <property type="project" value="UniProtKB-UniRule"/>
</dbReference>
<dbReference type="GO" id="GO:0004594">
    <property type="term" value="F:pantothenate kinase activity"/>
    <property type="evidence" value="ECO:0007669"/>
    <property type="project" value="UniProtKB-UniRule"/>
</dbReference>
<dbReference type="GO" id="GO:0015937">
    <property type="term" value="P:coenzyme A biosynthetic process"/>
    <property type="evidence" value="ECO:0007669"/>
    <property type="project" value="UniProtKB-UniRule"/>
</dbReference>
<dbReference type="CDD" id="cd02025">
    <property type="entry name" value="PanK"/>
    <property type="match status" value="1"/>
</dbReference>
<dbReference type="Gene3D" id="3.40.50.300">
    <property type="entry name" value="P-loop containing nucleotide triphosphate hydrolases"/>
    <property type="match status" value="1"/>
</dbReference>
<dbReference type="HAMAP" id="MF_00215">
    <property type="entry name" value="Pantothen_kinase_1"/>
    <property type="match status" value="1"/>
</dbReference>
<dbReference type="InterPro" id="IPR027417">
    <property type="entry name" value="P-loop_NTPase"/>
</dbReference>
<dbReference type="InterPro" id="IPR004566">
    <property type="entry name" value="PanK"/>
</dbReference>
<dbReference type="InterPro" id="IPR006083">
    <property type="entry name" value="PRK/URK"/>
</dbReference>
<dbReference type="NCBIfam" id="TIGR00554">
    <property type="entry name" value="panK_bact"/>
    <property type="match status" value="1"/>
</dbReference>
<dbReference type="PANTHER" id="PTHR10285">
    <property type="entry name" value="URIDINE KINASE"/>
    <property type="match status" value="1"/>
</dbReference>
<dbReference type="Pfam" id="PF00485">
    <property type="entry name" value="PRK"/>
    <property type="match status" value="1"/>
</dbReference>
<dbReference type="PIRSF" id="PIRSF000545">
    <property type="entry name" value="Pantothenate_kin"/>
    <property type="match status" value="1"/>
</dbReference>
<dbReference type="SUPFAM" id="SSF52540">
    <property type="entry name" value="P-loop containing nucleoside triphosphate hydrolases"/>
    <property type="match status" value="1"/>
</dbReference>
<organism>
    <name type="scientific">Corynebacterium efficiens (strain DSM 44549 / YS-314 / AJ 12310 / JCM 11189 / NBRC 100395)</name>
    <dbReference type="NCBI Taxonomy" id="196164"/>
    <lineage>
        <taxon>Bacteria</taxon>
        <taxon>Bacillati</taxon>
        <taxon>Actinomycetota</taxon>
        <taxon>Actinomycetes</taxon>
        <taxon>Mycobacteriales</taxon>
        <taxon>Corynebacteriaceae</taxon>
        <taxon>Corynebacterium</taxon>
    </lineage>
</organism>
<reference key="1">
    <citation type="journal article" date="2003" name="Genome Res.">
        <title>Comparative complete genome sequence analysis of the amino acid replacements responsible for the thermostability of Corynebacterium efficiens.</title>
        <authorList>
            <person name="Nishio Y."/>
            <person name="Nakamura Y."/>
            <person name="Kawarabayasi Y."/>
            <person name="Usuda Y."/>
            <person name="Kimura E."/>
            <person name="Sugimoto S."/>
            <person name="Matsui K."/>
            <person name="Yamagishi A."/>
            <person name="Kikuchi H."/>
            <person name="Ikeo K."/>
            <person name="Gojobori T."/>
        </authorList>
    </citation>
    <scope>NUCLEOTIDE SEQUENCE [LARGE SCALE GENOMIC DNA]</scope>
    <source>
        <strain>DSM 44549 / YS-314 / AJ 12310 / JCM 11189 / NBRC 100395</strain>
    </source>
</reference>
<sequence length="328" mass="37255">MAAPLNAQTRAPQATGRAPDFSPYLDFDRAQWRELRKSMPQVLTEEEVVALRGLGENIDLDEVAEVYLPLSRLIHLQVNARQELTVATETFLGTSSARMFPGSHVPFVIGVAGSVAVGKSTTARLLQVLLQRWSSHPRVDLVTTDGFLYPGEELQRRGIMNRKGFPESYDQRALLRFVTDVKSGKFNVRAPVYSHTAYDRVPGKYITVDQPDILIVEGLNVLQTGPTLMVSDLFDFSVYVDARTEDIERWYIERFLQLRDTAFRHPDAHFRHYADIGDEKATAVAREIWQSINLPNLVENILPTRVRASLVLRKSADHLVERVRMRKL</sequence>
<gene>
    <name evidence="1" type="primary">coaA</name>
    <name type="ordered locus">CE1057</name>
</gene>
<keyword id="KW-0067">ATP-binding</keyword>
<keyword id="KW-0173">Coenzyme A biosynthesis</keyword>
<keyword id="KW-0963">Cytoplasm</keyword>
<keyword id="KW-0418">Kinase</keyword>
<keyword id="KW-0547">Nucleotide-binding</keyword>
<keyword id="KW-1185">Reference proteome</keyword>
<keyword id="KW-0808">Transferase</keyword>
<evidence type="ECO:0000255" key="1">
    <source>
        <dbReference type="HAMAP-Rule" id="MF_00215"/>
    </source>
</evidence>
<evidence type="ECO:0000256" key="2">
    <source>
        <dbReference type="SAM" id="MobiDB-lite"/>
    </source>
</evidence>
<proteinExistence type="inferred from homology"/>
<protein>
    <recommendedName>
        <fullName evidence="1">Pantothenate kinase</fullName>
        <ecNumber evidence="1">2.7.1.33</ecNumber>
    </recommendedName>
    <alternativeName>
        <fullName evidence="1">Pantothenic acid kinase</fullName>
    </alternativeName>
</protein>
<feature type="chain" id="PRO_0000194423" description="Pantothenate kinase">
    <location>
        <begin position="1"/>
        <end position="328"/>
    </location>
</feature>
<feature type="region of interest" description="Disordered" evidence="2">
    <location>
        <begin position="1"/>
        <end position="22"/>
    </location>
</feature>
<feature type="compositionally biased region" description="Polar residues" evidence="2">
    <location>
        <begin position="1"/>
        <end position="12"/>
    </location>
</feature>
<feature type="binding site" evidence="1">
    <location>
        <begin position="113"/>
        <end position="120"/>
    </location>
    <ligand>
        <name>ATP</name>
        <dbReference type="ChEBI" id="CHEBI:30616"/>
    </ligand>
</feature>
<name>COAA_COREF</name>
<comment type="catalytic activity">
    <reaction evidence="1">
        <text>(R)-pantothenate + ATP = (R)-4'-phosphopantothenate + ADP + H(+)</text>
        <dbReference type="Rhea" id="RHEA:16373"/>
        <dbReference type="ChEBI" id="CHEBI:10986"/>
        <dbReference type="ChEBI" id="CHEBI:15378"/>
        <dbReference type="ChEBI" id="CHEBI:29032"/>
        <dbReference type="ChEBI" id="CHEBI:30616"/>
        <dbReference type="ChEBI" id="CHEBI:456216"/>
        <dbReference type="EC" id="2.7.1.33"/>
    </reaction>
</comment>
<comment type="pathway">
    <text evidence="1">Cofactor biosynthesis; coenzyme A biosynthesis; CoA from (R)-pantothenate: step 1/5.</text>
</comment>
<comment type="subcellular location">
    <subcellularLocation>
        <location evidence="1">Cytoplasm</location>
    </subcellularLocation>
</comment>
<comment type="similarity">
    <text evidence="1">Belongs to the prokaryotic pantothenate kinase family.</text>
</comment>